<protein>
    <recommendedName>
        <fullName evidence="1">Recombination protein RecR</fullName>
    </recommendedName>
</protein>
<organism>
    <name type="scientific">Flavobacterium johnsoniae (strain ATCC 17061 / DSM 2064 / JCM 8514 / BCRC 14874 / CCUG 350202 / NBRC 14942 / NCIMB 11054 / UW101)</name>
    <name type="common">Cytophaga johnsonae</name>
    <dbReference type="NCBI Taxonomy" id="376686"/>
    <lineage>
        <taxon>Bacteria</taxon>
        <taxon>Pseudomonadati</taxon>
        <taxon>Bacteroidota</taxon>
        <taxon>Flavobacteriia</taxon>
        <taxon>Flavobacteriales</taxon>
        <taxon>Flavobacteriaceae</taxon>
        <taxon>Flavobacterium</taxon>
    </lineage>
</organism>
<proteinExistence type="inferred from homology"/>
<evidence type="ECO:0000255" key="1">
    <source>
        <dbReference type="HAMAP-Rule" id="MF_00017"/>
    </source>
</evidence>
<gene>
    <name evidence="1" type="primary">recR</name>
    <name type="ordered locus">Fjoh_0362</name>
</gene>
<accession>A5FN24</accession>
<keyword id="KW-0227">DNA damage</keyword>
<keyword id="KW-0233">DNA recombination</keyword>
<keyword id="KW-0234">DNA repair</keyword>
<keyword id="KW-0479">Metal-binding</keyword>
<keyword id="KW-0862">Zinc</keyword>
<keyword id="KW-0863">Zinc-finger</keyword>
<comment type="function">
    <text evidence="1">May play a role in DNA repair. It seems to be involved in an RecBC-independent recombinational process of DNA repair. It may act with RecF and RecO.</text>
</comment>
<comment type="similarity">
    <text evidence="1">Belongs to the RecR family.</text>
</comment>
<dbReference type="EMBL" id="CP000685">
    <property type="protein sequence ID" value="ABQ03398.1"/>
    <property type="molecule type" value="Genomic_DNA"/>
</dbReference>
<dbReference type="RefSeq" id="WP_012022468.1">
    <property type="nucleotide sequence ID" value="NC_009441.1"/>
</dbReference>
<dbReference type="SMR" id="A5FN24"/>
<dbReference type="STRING" id="376686.Fjoh_0362"/>
<dbReference type="KEGG" id="fjo:Fjoh_0362"/>
<dbReference type="eggNOG" id="COG0353">
    <property type="taxonomic scope" value="Bacteria"/>
</dbReference>
<dbReference type="HOGENOM" id="CLU_060739_1_1_10"/>
<dbReference type="OrthoDB" id="9802672at2"/>
<dbReference type="Proteomes" id="UP000006694">
    <property type="component" value="Chromosome"/>
</dbReference>
<dbReference type="GO" id="GO:0003677">
    <property type="term" value="F:DNA binding"/>
    <property type="evidence" value="ECO:0007669"/>
    <property type="project" value="UniProtKB-UniRule"/>
</dbReference>
<dbReference type="GO" id="GO:0008270">
    <property type="term" value="F:zinc ion binding"/>
    <property type="evidence" value="ECO:0007669"/>
    <property type="project" value="UniProtKB-KW"/>
</dbReference>
<dbReference type="GO" id="GO:0006310">
    <property type="term" value="P:DNA recombination"/>
    <property type="evidence" value="ECO:0007669"/>
    <property type="project" value="UniProtKB-UniRule"/>
</dbReference>
<dbReference type="GO" id="GO:0006281">
    <property type="term" value="P:DNA repair"/>
    <property type="evidence" value="ECO:0007669"/>
    <property type="project" value="UniProtKB-UniRule"/>
</dbReference>
<dbReference type="CDD" id="cd01025">
    <property type="entry name" value="TOPRIM_recR"/>
    <property type="match status" value="1"/>
</dbReference>
<dbReference type="Gene3D" id="3.30.60.80">
    <property type="match status" value="1"/>
</dbReference>
<dbReference type="Gene3D" id="3.40.1360.10">
    <property type="match status" value="1"/>
</dbReference>
<dbReference type="Gene3D" id="6.10.250.240">
    <property type="match status" value="1"/>
</dbReference>
<dbReference type="Gene3D" id="1.10.8.420">
    <property type="entry name" value="RecR Domain 1"/>
    <property type="match status" value="1"/>
</dbReference>
<dbReference type="HAMAP" id="MF_00017">
    <property type="entry name" value="RecR"/>
    <property type="match status" value="1"/>
</dbReference>
<dbReference type="InterPro" id="IPR000093">
    <property type="entry name" value="DNA_Rcmb_RecR"/>
</dbReference>
<dbReference type="InterPro" id="IPR023627">
    <property type="entry name" value="Rcmb_RecR"/>
</dbReference>
<dbReference type="InterPro" id="IPR015967">
    <property type="entry name" value="Rcmb_RecR_Znf"/>
</dbReference>
<dbReference type="InterPro" id="IPR006171">
    <property type="entry name" value="TOPRIM_dom"/>
</dbReference>
<dbReference type="InterPro" id="IPR034137">
    <property type="entry name" value="TOPRIM_RecR"/>
</dbReference>
<dbReference type="NCBIfam" id="TIGR00615">
    <property type="entry name" value="recR"/>
    <property type="match status" value="1"/>
</dbReference>
<dbReference type="PANTHER" id="PTHR30446">
    <property type="entry name" value="RECOMBINATION PROTEIN RECR"/>
    <property type="match status" value="1"/>
</dbReference>
<dbReference type="PANTHER" id="PTHR30446:SF0">
    <property type="entry name" value="RECOMBINATION PROTEIN RECR"/>
    <property type="match status" value="1"/>
</dbReference>
<dbReference type="Pfam" id="PF21175">
    <property type="entry name" value="RecR_C"/>
    <property type="match status" value="1"/>
</dbReference>
<dbReference type="Pfam" id="PF21176">
    <property type="entry name" value="RecR_HhH"/>
    <property type="match status" value="1"/>
</dbReference>
<dbReference type="Pfam" id="PF02132">
    <property type="entry name" value="RecR_ZnF"/>
    <property type="match status" value="1"/>
</dbReference>
<dbReference type="Pfam" id="PF13662">
    <property type="entry name" value="Toprim_4"/>
    <property type="match status" value="1"/>
</dbReference>
<dbReference type="SMART" id="SM00493">
    <property type="entry name" value="TOPRIM"/>
    <property type="match status" value="1"/>
</dbReference>
<dbReference type="SUPFAM" id="SSF111304">
    <property type="entry name" value="Recombination protein RecR"/>
    <property type="match status" value="1"/>
</dbReference>
<dbReference type="PROSITE" id="PS01300">
    <property type="entry name" value="RECR"/>
    <property type="match status" value="1"/>
</dbReference>
<dbReference type="PROSITE" id="PS50880">
    <property type="entry name" value="TOPRIM"/>
    <property type="match status" value="1"/>
</dbReference>
<name>RECR_FLAJ1</name>
<sequence length="206" mass="22962">MEFSSKLIEKAVNEMSQLPGIGKRTALRLVLHLLKQPKEQTGFLSQALLNMREDIKFCENCHNISDTKVCEICANSVRNHQTICVVEDIRDVMAIENTGQYKGIYHVLGGKISPIEGVGPSQLNISSLVEKVKSGKVVEIIFALSSTMEGDTTNFYIYKQIAESEIIISTIARGISVGDELEYADEITLGRSILHRVPFEKTFKNN</sequence>
<reference key="1">
    <citation type="journal article" date="2009" name="Appl. Environ. Microbiol.">
        <title>Novel features of the polysaccharide-digesting gliding bacterium Flavobacterium johnsoniae as revealed by genome sequence analysis.</title>
        <authorList>
            <person name="McBride M.J."/>
            <person name="Xie G."/>
            <person name="Martens E.C."/>
            <person name="Lapidus A."/>
            <person name="Henrissat B."/>
            <person name="Rhodes R.G."/>
            <person name="Goltsman E."/>
            <person name="Wang W."/>
            <person name="Xu J."/>
            <person name="Hunnicutt D.W."/>
            <person name="Staroscik A.M."/>
            <person name="Hoover T.R."/>
            <person name="Cheng Y.Q."/>
            <person name="Stein J.L."/>
        </authorList>
    </citation>
    <scope>NUCLEOTIDE SEQUENCE [LARGE SCALE GENOMIC DNA]</scope>
    <source>
        <strain>ATCC 17061 / DSM 2064 / JCM 8514 / BCRC 14874 / CCUG 350202 / NBRC 14942 / NCIMB 11054 / UW101</strain>
    </source>
</reference>
<feature type="chain" id="PRO_1000074120" description="Recombination protein RecR">
    <location>
        <begin position="1"/>
        <end position="206"/>
    </location>
</feature>
<feature type="domain" description="Toprim" evidence="1">
    <location>
        <begin position="81"/>
        <end position="176"/>
    </location>
</feature>
<feature type="zinc finger region" description="C4-type" evidence="1">
    <location>
        <begin position="58"/>
        <end position="73"/>
    </location>
</feature>